<proteinExistence type="inferred from homology"/>
<evidence type="ECO:0000255" key="1">
    <source>
        <dbReference type="HAMAP-Rule" id="MF_01212"/>
    </source>
</evidence>
<evidence type="ECO:0000255" key="2">
    <source>
        <dbReference type="PROSITE-ProRule" id="PRU01175"/>
    </source>
</evidence>
<gene>
    <name type="ordered locus">GSU1246</name>
</gene>
<reference key="1">
    <citation type="journal article" date="2003" name="Science">
        <title>Genome of Geobacter sulfurreducens: metal reduction in subsurface environments.</title>
        <authorList>
            <person name="Methe B.A."/>
            <person name="Nelson K.E."/>
            <person name="Eisen J.A."/>
            <person name="Paulsen I.T."/>
            <person name="Nelson W.C."/>
            <person name="Heidelberg J.F."/>
            <person name="Wu D."/>
            <person name="Wu M."/>
            <person name="Ward N.L."/>
            <person name="Beanan M.J."/>
            <person name="Dodson R.J."/>
            <person name="Madupu R."/>
            <person name="Brinkac L.M."/>
            <person name="Daugherty S.C."/>
            <person name="DeBoy R.T."/>
            <person name="Durkin A.S."/>
            <person name="Gwinn M.L."/>
            <person name="Kolonay J.F."/>
            <person name="Sullivan S.A."/>
            <person name="Haft D.H."/>
            <person name="Selengut J."/>
            <person name="Davidsen T.M."/>
            <person name="Zafar N."/>
            <person name="White O."/>
            <person name="Tran B."/>
            <person name="Romero C."/>
            <person name="Forberger H.A."/>
            <person name="Weidman J.F."/>
            <person name="Khouri H.M."/>
            <person name="Feldblyum T.V."/>
            <person name="Utterback T.R."/>
            <person name="Van Aken S.E."/>
            <person name="Lovley D.R."/>
            <person name="Fraser C.M."/>
        </authorList>
    </citation>
    <scope>NUCLEOTIDE SEQUENCE [LARGE SCALE GENOMIC DNA]</scope>
    <source>
        <strain>ATCC 51573 / DSM 12127 / PCA</strain>
    </source>
</reference>
<feature type="chain" id="PRO_1000066417" description="Deoxyguanosinetriphosphate triphosphohydrolase-like protein">
    <location>
        <begin position="1"/>
        <end position="385"/>
    </location>
</feature>
<feature type="domain" description="HD" evidence="2">
    <location>
        <begin position="75"/>
        <end position="204"/>
    </location>
</feature>
<protein>
    <recommendedName>
        <fullName evidence="1">Deoxyguanosinetriphosphate triphosphohydrolase-like protein</fullName>
    </recommendedName>
</protein>
<dbReference type="EMBL" id="AE017180">
    <property type="protein sequence ID" value="AAR34622.2"/>
    <property type="molecule type" value="Genomic_DNA"/>
</dbReference>
<dbReference type="RefSeq" id="NP_952299.2">
    <property type="nucleotide sequence ID" value="NC_002939.5"/>
</dbReference>
<dbReference type="RefSeq" id="WP_010941902.1">
    <property type="nucleotide sequence ID" value="NC_002939.5"/>
</dbReference>
<dbReference type="SMR" id="Q74DR9"/>
<dbReference type="FunCoup" id="Q74DR9">
    <property type="interactions" value="149"/>
</dbReference>
<dbReference type="STRING" id="243231.GSU1246"/>
<dbReference type="EnsemblBacteria" id="AAR34622">
    <property type="protein sequence ID" value="AAR34622"/>
    <property type="gene ID" value="GSU1246"/>
</dbReference>
<dbReference type="KEGG" id="gsu:GSU1246"/>
<dbReference type="PATRIC" id="fig|243231.5.peg.1241"/>
<dbReference type="eggNOG" id="COG0232">
    <property type="taxonomic scope" value="Bacteria"/>
</dbReference>
<dbReference type="HOGENOM" id="CLU_028163_1_0_7"/>
<dbReference type="InParanoid" id="Q74DR9"/>
<dbReference type="OrthoDB" id="9803619at2"/>
<dbReference type="Proteomes" id="UP000000577">
    <property type="component" value="Chromosome"/>
</dbReference>
<dbReference type="GO" id="GO:0008832">
    <property type="term" value="F:dGTPase activity"/>
    <property type="evidence" value="ECO:0000318"/>
    <property type="project" value="GO_Central"/>
</dbReference>
<dbReference type="GO" id="GO:0006203">
    <property type="term" value="P:dGTP catabolic process"/>
    <property type="evidence" value="ECO:0000318"/>
    <property type="project" value="GO_Central"/>
</dbReference>
<dbReference type="CDD" id="cd00077">
    <property type="entry name" value="HDc"/>
    <property type="match status" value="1"/>
</dbReference>
<dbReference type="FunFam" id="1.10.3210.10:FF:000024">
    <property type="entry name" value="Deoxyguanosinetriphosphate triphosphohydrolase-like protein"/>
    <property type="match status" value="1"/>
</dbReference>
<dbReference type="Gene3D" id="1.10.3210.10">
    <property type="entry name" value="Hypothetical protein af1432"/>
    <property type="match status" value="1"/>
</dbReference>
<dbReference type="HAMAP" id="MF_01212">
    <property type="entry name" value="dGTPase_type2"/>
    <property type="match status" value="1"/>
</dbReference>
<dbReference type="InterPro" id="IPR006261">
    <property type="entry name" value="dGTPase"/>
</dbReference>
<dbReference type="InterPro" id="IPR050135">
    <property type="entry name" value="dGTPase-like"/>
</dbReference>
<dbReference type="InterPro" id="IPR023023">
    <property type="entry name" value="dNTPase_2"/>
</dbReference>
<dbReference type="InterPro" id="IPR003607">
    <property type="entry name" value="HD/PDEase_dom"/>
</dbReference>
<dbReference type="InterPro" id="IPR006674">
    <property type="entry name" value="HD_domain"/>
</dbReference>
<dbReference type="InterPro" id="IPR026875">
    <property type="entry name" value="PHydrolase_assoc_dom"/>
</dbReference>
<dbReference type="NCBIfam" id="TIGR01353">
    <property type="entry name" value="dGTP_triPase"/>
    <property type="match status" value="1"/>
</dbReference>
<dbReference type="NCBIfam" id="NF002326">
    <property type="entry name" value="PRK01286.1-1"/>
    <property type="match status" value="1"/>
</dbReference>
<dbReference type="PANTHER" id="PTHR11373:SF43">
    <property type="entry name" value="DEOXYGUANOSINETRIPHOSPHATE TRIPHOSPHOHYDROLASE-LIKE PROTEIN"/>
    <property type="match status" value="1"/>
</dbReference>
<dbReference type="PANTHER" id="PTHR11373">
    <property type="entry name" value="DEOXYNUCLEOSIDE TRIPHOSPHATE TRIPHOSPHOHYDROLASE"/>
    <property type="match status" value="1"/>
</dbReference>
<dbReference type="Pfam" id="PF01966">
    <property type="entry name" value="HD"/>
    <property type="match status" value="1"/>
</dbReference>
<dbReference type="Pfam" id="PF13286">
    <property type="entry name" value="HD_assoc"/>
    <property type="match status" value="1"/>
</dbReference>
<dbReference type="SMART" id="SM00471">
    <property type="entry name" value="HDc"/>
    <property type="match status" value="1"/>
</dbReference>
<dbReference type="SUPFAM" id="SSF109604">
    <property type="entry name" value="HD-domain/PDEase-like"/>
    <property type="match status" value="1"/>
</dbReference>
<dbReference type="PROSITE" id="PS51831">
    <property type="entry name" value="HD"/>
    <property type="match status" value="1"/>
</dbReference>
<organism>
    <name type="scientific">Geobacter sulfurreducens (strain ATCC 51573 / DSM 12127 / PCA)</name>
    <dbReference type="NCBI Taxonomy" id="243231"/>
    <lineage>
        <taxon>Bacteria</taxon>
        <taxon>Pseudomonadati</taxon>
        <taxon>Thermodesulfobacteriota</taxon>
        <taxon>Desulfuromonadia</taxon>
        <taxon>Geobacterales</taxon>
        <taxon>Geobacteraceae</taxon>
        <taxon>Geobacter</taxon>
    </lineage>
</organism>
<accession>Q74DR9</accession>
<keyword id="KW-0378">Hydrolase</keyword>
<keyword id="KW-1185">Reference proteome</keyword>
<sequence>MVEEEGMRSLERADLAGYAARSCRSRGRMHPEEFRDDRPAFERDRDRIIHCAAFRRLEYKTQVFVNHEGDYYRTRLTHSLEVAQIGKAIARRLALNEELTEALALAHDLGHTPFGHTGEEVLNRLMEGFGGFEHNLQSFRVVDQLEERYPGFNGLNLSWEVLEGIIKHSSPYDRPTGLIEGFLPGVVPTIEAQIINFADEIAYNNHDIDDGLKSGYITIEQLNGVDLWREVWERIDTAHPGLDRERKKFQTISALIGLLIRDLITATEANLRAYGVSTLDDVRRVNRPLVTFSSAMEERNRSLKRFLFTNLYRHHKVERMRVKAERYLTQLFESYVKHPTLLPRKYQQKMDTLGRERVVCDYIAGMTDRFALDEFKRLFEPYERV</sequence>
<name>DGTL1_GEOSL</name>
<comment type="similarity">
    <text evidence="1">Belongs to the dGTPase family. Type 2 subfamily.</text>
</comment>